<name>GATB_THEPX</name>
<keyword id="KW-0067">ATP-binding</keyword>
<keyword id="KW-0436">Ligase</keyword>
<keyword id="KW-0547">Nucleotide-binding</keyword>
<keyword id="KW-0648">Protein biosynthesis</keyword>
<dbReference type="EC" id="6.3.5.-" evidence="1"/>
<dbReference type="EMBL" id="CP000923">
    <property type="protein sequence ID" value="ABY91849.1"/>
    <property type="molecule type" value="Genomic_DNA"/>
</dbReference>
<dbReference type="RefSeq" id="WP_003868768.1">
    <property type="nucleotide sequence ID" value="NC_010320.1"/>
</dbReference>
<dbReference type="SMR" id="B0K3S4"/>
<dbReference type="KEGG" id="tex:Teth514_0541"/>
<dbReference type="HOGENOM" id="CLU_019240_0_0_9"/>
<dbReference type="Proteomes" id="UP000002155">
    <property type="component" value="Chromosome"/>
</dbReference>
<dbReference type="GO" id="GO:0050566">
    <property type="term" value="F:asparaginyl-tRNA synthase (glutamine-hydrolyzing) activity"/>
    <property type="evidence" value="ECO:0007669"/>
    <property type="project" value="RHEA"/>
</dbReference>
<dbReference type="GO" id="GO:0005524">
    <property type="term" value="F:ATP binding"/>
    <property type="evidence" value="ECO:0007669"/>
    <property type="project" value="UniProtKB-KW"/>
</dbReference>
<dbReference type="GO" id="GO:0050567">
    <property type="term" value="F:glutaminyl-tRNA synthase (glutamine-hydrolyzing) activity"/>
    <property type="evidence" value="ECO:0007669"/>
    <property type="project" value="UniProtKB-UniRule"/>
</dbReference>
<dbReference type="GO" id="GO:0070681">
    <property type="term" value="P:glutaminyl-tRNAGln biosynthesis via transamidation"/>
    <property type="evidence" value="ECO:0007669"/>
    <property type="project" value="TreeGrafter"/>
</dbReference>
<dbReference type="GO" id="GO:0006412">
    <property type="term" value="P:translation"/>
    <property type="evidence" value="ECO:0007669"/>
    <property type="project" value="UniProtKB-UniRule"/>
</dbReference>
<dbReference type="FunFam" id="1.10.10.410:FF:000001">
    <property type="entry name" value="Aspartyl/glutamyl-tRNA(Asn/Gln) amidotransferase subunit B"/>
    <property type="match status" value="1"/>
</dbReference>
<dbReference type="FunFam" id="1.10.150.380:FF:000001">
    <property type="entry name" value="Aspartyl/glutamyl-tRNA(Asn/Gln) amidotransferase subunit B"/>
    <property type="match status" value="1"/>
</dbReference>
<dbReference type="Gene3D" id="1.10.10.410">
    <property type="match status" value="1"/>
</dbReference>
<dbReference type="Gene3D" id="1.10.150.380">
    <property type="entry name" value="GatB domain, N-terminal subdomain"/>
    <property type="match status" value="1"/>
</dbReference>
<dbReference type="HAMAP" id="MF_00121">
    <property type="entry name" value="GatB"/>
    <property type="match status" value="1"/>
</dbReference>
<dbReference type="InterPro" id="IPR017959">
    <property type="entry name" value="Asn/Gln-tRNA_amidoTrfase_suB/E"/>
</dbReference>
<dbReference type="InterPro" id="IPR006075">
    <property type="entry name" value="Asn/Gln-tRNA_Trfase_suB/E_cat"/>
</dbReference>
<dbReference type="InterPro" id="IPR018027">
    <property type="entry name" value="Asn/Gln_amidotransferase"/>
</dbReference>
<dbReference type="InterPro" id="IPR003789">
    <property type="entry name" value="Asn/Gln_tRNA_amidoTrase-B-like"/>
</dbReference>
<dbReference type="InterPro" id="IPR004413">
    <property type="entry name" value="GatB"/>
</dbReference>
<dbReference type="InterPro" id="IPR042114">
    <property type="entry name" value="GatB_C_1"/>
</dbReference>
<dbReference type="InterPro" id="IPR023168">
    <property type="entry name" value="GatB_Yqey_C_2"/>
</dbReference>
<dbReference type="InterPro" id="IPR017958">
    <property type="entry name" value="Gln-tRNA_amidoTrfase_suB_CS"/>
</dbReference>
<dbReference type="InterPro" id="IPR014746">
    <property type="entry name" value="Gln_synth/guanido_kin_cat_dom"/>
</dbReference>
<dbReference type="NCBIfam" id="TIGR00133">
    <property type="entry name" value="gatB"/>
    <property type="match status" value="1"/>
</dbReference>
<dbReference type="NCBIfam" id="NF004012">
    <property type="entry name" value="PRK05477.1-2"/>
    <property type="match status" value="1"/>
</dbReference>
<dbReference type="NCBIfam" id="NF004014">
    <property type="entry name" value="PRK05477.1-4"/>
    <property type="match status" value="1"/>
</dbReference>
<dbReference type="NCBIfam" id="NF004015">
    <property type="entry name" value="PRK05477.1-5"/>
    <property type="match status" value="1"/>
</dbReference>
<dbReference type="PANTHER" id="PTHR11659">
    <property type="entry name" value="GLUTAMYL-TRNA GLN AMIDOTRANSFERASE SUBUNIT B MITOCHONDRIAL AND PROKARYOTIC PET112-RELATED"/>
    <property type="match status" value="1"/>
</dbReference>
<dbReference type="PANTHER" id="PTHR11659:SF0">
    <property type="entry name" value="GLUTAMYL-TRNA(GLN) AMIDOTRANSFERASE SUBUNIT B, MITOCHONDRIAL"/>
    <property type="match status" value="1"/>
</dbReference>
<dbReference type="Pfam" id="PF02934">
    <property type="entry name" value="GatB_N"/>
    <property type="match status" value="1"/>
</dbReference>
<dbReference type="Pfam" id="PF02637">
    <property type="entry name" value="GatB_Yqey"/>
    <property type="match status" value="1"/>
</dbReference>
<dbReference type="SMART" id="SM00845">
    <property type="entry name" value="GatB_Yqey"/>
    <property type="match status" value="1"/>
</dbReference>
<dbReference type="SUPFAM" id="SSF89095">
    <property type="entry name" value="GatB/YqeY motif"/>
    <property type="match status" value="1"/>
</dbReference>
<dbReference type="SUPFAM" id="SSF55931">
    <property type="entry name" value="Glutamine synthetase/guanido kinase"/>
    <property type="match status" value="1"/>
</dbReference>
<dbReference type="PROSITE" id="PS01234">
    <property type="entry name" value="GATB"/>
    <property type="match status" value="1"/>
</dbReference>
<proteinExistence type="inferred from homology"/>
<reference key="1">
    <citation type="submission" date="2008-01" db="EMBL/GenBank/DDBJ databases">
        <title>Complete sequence of Thermoanaerobacter sp. X514.</title>
        <authorList>
            <consortium name="US DOE Joint Genome Institute"/>
            <person name="Copeland A."/>
            <person name="Lucas S."/>
            <person name="Lapidus A."/>
            <person name="Barry K."/>
            <person name="Glavina del Rio T."/>
            <person name="Dalin E."/>
            <person name="Tice H."/>
            <person name="Pitluck S."/>
            <person name="Bruce D."/>
            <person name="Goodwin L."/>
            <person name="Saunders E."/>
            <person name="Brettin T."/>
            <person name="Detter J.C."/>
            <person name="Han C."/>
            <person name="Schmutz J."/>
            <person name="Larimer F."/>
            <person name="Land M."/>
            <person name="Hauser L."/>
            <person name="Kyrpides N."/>
            <person name="Kim E."/>
            <person name="Hemme C."/>
            <person name="Fields M.W."/>
            <person name="He Z."/>
            <person name="Zhou J."/>
            <person name="Richardson P."/>
        </authorList>
    </citation>
    <scope>NUCLEOTIDE SEQUENCE [LARGE SCALE GENOMIC DNA]</scope>
    <source>
        <strain>X514</strain>
    </source>
</reference>
<sequence length="475" mass="53701">MKYEAVIGLEVHAELLTESKIFCGCTTKFGGEPNTHVCPVCLGLPGTLPVLNKKVVEYAVRAGLALNCTIANFSKMDRKNYFYPDLPKAYQISQYDLPLCSNGYVEIEVDGKVKKIGIKRIHIEEDAGKLLHENTDGSLVDYNRAGVPLIEIVSEPDMSTPEEAYQYLTKLKSILEYTEVSDCKMQEGSLRVDTNVSVRPVGSTELGTKIELKNLNSFRAVQKALEYEIKRQIKVLEEGGTIVQETRRWNEAKGITEPMRTKEEAHDYRYFPEPDLVPIIVTDEWKEEIRKSLPEMPHRKRERFISEYGLPEYDAKIITSSKKIADFFEKCALEYDSPKAVSNWLMGEFSRLMNETGKEIDEVPVTPQMLVKLLKLIDNGVISGSIAKTVFEEMFGTGKEPEVIVEEKGLKQIANEDELREIIKKVIAENPKSVEDYKNGKEKAMGFLVGQVMKATKGKANPQLTNQILKEELSK</sequence>
<organism>
    <name type="scientific">Thermoanaerobacter sp. (strain X514)</name>
    <dbReference type="NCBI Taxonomy" id="399726"/>
    <lineage>
        <taxon>Bacteria</taxon>
        <taxon>Bacillati</taxon>
        <taxon>Bacillota</taxon>
        <taxon>Clostridia</taxon>
        <taxon>Thermoanaerobacterales</taxon>
        <taxon>Thermoanaerobacteraceae</taxon>
        <taxon>Thermoanaerobacter</taxon>
    </lineage>
</organism>
<gene>
    <name evidence="1" type="primary">gatB</name>
    <name type="ordered locus">Teth514_0541</name>
</gene>
<protein>
    <recommendedName>
        <fullName evidence="1">Aspartyl/glutamyl-tRNA(Asn/Gln) amidotransferase subunit B</fullName>
        <shortName evidence="1">Asp/Glu-ADT subunit B</shortName>
        <ecNumber evidence="1">6.3.5.-</ecNumber>
    </recommendedName>
</protein>
<comment type="function">
    <text evidence="1">Allows the formation of correctly charged Asn-tRNA(Asn) or Gln-tRNA(Gln) through the transamidation of misacylated Asp-tRNA(Asn) or Glu-tRNA(Gln) in organisms which lack either or both of asparaginyl-tRNA or glutaminyl-tRNA synthetases. The reaction takes place in the presence of glutamine and ATP through an activated phospho-Asp-tRNA(Asn) or phospho-Glu-tRNA(Gln).</text>
</comment>
<comment type="catalytic activity">
    <reaction evidence="1">
        <text>L-glutamyl-tRNA(Gln) + L-glutamine + ATP + H2O = L-glutaminyl-tRNA(Gln) + L-glutamate + ADP + phosphate + H(+)</text>
        <dbReference type="Rhea" id="RHEA:17521"/>
        <dbReference type="Rhea" id="RHEA-COMP:9681"/>
        <dbReference type="Rhea" id="RHEA-COMP:9684"/>
        <dbReference type="ChEBI" id="CHEBI:15377"/>
        <dbReference type="ChEBI" id="CHEBI:15378"/>
        <dbReference type="ChEBI" id="CHEBI:29985"/>
        <dbReference type="ChEBI" id="CHEBI:30616"/>
        <dbReference type="ChEBI" id="CHEBI:43474"/>
        <dbReference type="ChEBI" id="CHEBI:58359"/>
        <dbReference type="ChEBI" id="CHEBI:78520"/>
        <dbReference type="ChEBI" id="CHEBI:78521"/>
        <dbReference type="ChEBI" id="CHEBI:456216"/>
    </reaction>
</comment>
<comment type="catalytic activity">
    <reaction evidence="1">
        <text>L-aspartyl-tRNA(Asn) + L-glutamine + ATP + H2O = L-asparaginyl-tRNA(Asn) + L-glutamate + ADP + phosphate + 2 H(+)</text>
        <dbReference type="Rhea" id="RHEA:14513"/>
        <dbReference type="Rhea" id="RHEA-COMP:9674"/>
        <dbReference type="Rhea" id="RHEA-COMP:9677"/>
        <dbReference type="ChEBI" id="CHEBI:15377"/>
        <dbReference type="ChEBI" id="CHEBI:15378"/>
        <dbReference type="ChEBI" id="CHEBI:29985"/>
        <dbReference type="ChEBI" id="CHEBI:30616"/>
        <dbReference type="ChEBI" id="CHEBI:43474"/>
        <dbReference type="ChEBI" id="CHEBI:58359"/>
        <dbReference type="ChEBI" id="CHEBI:78515"/>
        <dbReference type="ChEBI" id="CHEBI:78516"/>
        <dbReference type="ChEBI" id="CHEBI:456216"/>
    </reaction>
</comment>
<comment type="subunit">
    <text evidence="1">Heterotrimer of A, B and C subunits.</text>
</comment>
<comment type="similarity">
    <text evidence="1">Belongs to the GatB/GatE family. GatB subfamily.</text>
</comment>
<feature type="chain" id="PRO_1000095250" description="Aspartyl/glutamyl-tRNA(Asn/Gln) amidotransferase subunit B">
    <location>
        <begin position="1"/>
        <end position="475"/>
    </location>
</feature>
<evidence type="ECO:0000255" key="1">
    <source>
        <dbReference type="HAMAP-Rule" id="MF_00121"/>
    </source>
</evidence>
<accession>B0K3S4</accession>